<sequence>MPAAFPPDSVGLVTPQTAHFSEPLALACGRSLADYDLIYETYGTLNAQASNAVLICHALSGHHHAAGYHSVDDRKPGWWDSCIGPGKPIDTNKFFVVSLNNLGGCNGSTGPSSLNPETGKPFGADFPVLTVEDWVHSQARLADLLGIGQWAAVIGGSLGGMQALQWTITYPDRVRHCLAIASAPKLSAQNIAFNEVARQAILTDPEFHGGSFQEHGVIPKRGLMLARMVGHITYLSDDSMGEKFGRGLKSEKLNYDFHSVEFQVESYLRYQGEEFSGRFDANTYLLMTKALDYFDPAANFNDNLAKTFEGAKAKFCVMSFTTDWRFSPARSRELVDALMAARKDVSYLEIDAPQGHDAFLIPIPRYLQAFGNYMNRITL</sequence>
<protein>
    <recommendedName>
        <fullName evidence="1">Homoserine O-succinyltransferase</fullName>
        <shortName evidence="1">HST</shortName>
        <ecNumber evidence="1">2.3.1.46</ecNumber>
    </recommendedName>
    <alternativeName>
        <fullName evidence="1">Homoserine transsuccinylase</fullName>
        <shortName evidence="1">HTS</shortName>
    </alternativeName>
</protein>
<comment type="function">
    <text evidence="1">Transfers a succinyl group from succinyl-CoA to L-homoserine, forming succinyl-L-homoserine.</text>
</comment>
<comment type="catalytic activity">
    <reaction evidence="1">
        <text>L-homoserine + succinyl-CoA = O-succinyl-L-homoserine + CoA</text>
        <dbReference type="Rhea" id="RHEA:22008"/>
        <dbReference type="ChEBI" id="CHEBI:57287"/>
        <dbReference type="ChEBI" id="CHEBI:57292"/>
        <dbReference type="ChEBI" id="CHEBI:57476"/>
        <dbReference type="ChEBI" id="CHEBI:57661"/>
        <dbReference type="EC" id="2.3.1.46"/>
    </reaction>
</comment>
<comment type="pathway">
    <text evidence="1">Amino-acid biosynthesis; L-methionine biosynthesis via de novo pathway; O-succinyl-L-homoserine from L-homoserine: step 1/1.</text>
</comment>
<comment type="subunit">
    <text evidence="1">Homodimer.</text>
</comment>
<comment type="subcellular location">
    <subcellularLocation>
        <location evidence="1">Cytoplasm</location>
    </subcellularLocation>
</comment>
<comment type="similarity">
    <text evidence="1">Belongs to the AB hydrolase superfamily. MetX family.</text>
</comment>
<keyword id="KW-0012">Acyltransferase</keyword>
<keyword id="KW-0028">Amino-acid biosynthesis</keyword>
<keyword id="KW-0963">Cytoplasm</keyword>
<keyword id="KW-0486">Methionine biosynthesis</keyword>
<keyword id="KW-0808">Transferase</keyword>
<feature type="chain" id="PRO_0000231881" description="Homoserine O-succinyltransferase">
    <location>
        <begin position="1"/>
        <end position="379"/>
    </location>
</feature>
<feature type="domain" description="AB hydrolase-1" evidence="1">
    <location>
        <begin position="51"/>
        <end position="360"/>
    </location>
</feature>
<feature type="active site" description="Nucleophile" evidence="1">
    <location>
        <position position="157"/>
    </location>
</feature>
<feature type="active site" evidence="1">
    <location>
        <position position="323"/>
    </location>
</feature>
<feature type="active site" evidence="1">
    <location>
        <position position="356"/>
    </location>
</feature>
<feature type="binding site" evidence="1">
    <location>
        <position position="227"/>
    </location>
    <ligand>
        <name>substrate</name>
    </ligand>
</feature>
<feature type="binding site" evidence="1">
    <location>
        <position position="357"/>
    </location>
    <ligand>
        <name>substrate</name>
    </ligand>
</feature>
<feature type="site" description="Important for acyl-CoA specificity" evidence="1">
    <location>
        <position position="325"/>
    </location>
</feature>
<organism>
    <name type="scientific">Pseudomonas fluorescens (strain Pf0-1)</name>
    <dbReference type="NCBI Taxonomy" id="205922"/>
    <lineage>
        <taxon>Bacteria</taxon>
        <taxon>Pseudomonadati</taxon>
        <taxon>Pseudomonadota</taxon>
        <taxon>Gammaproteobacteria</taxon>
        <taxon>Pseudomonadales</taxon>
        <taxon>Pseudomonadaceae</taxon>
        <taxon>Pseudomonas</taxon>
    </lineage>
</organism>
<reference key="1">
    <citation type="journal article" date="2009" name="Genome Biol.">
        <title>Genomic and genetic analyses of diversity and plant interactions of Pseudomonas fluorescens.</title>
        <authorList>
            <person name="Silby M.W."/>
            <person name="Cerdeno-Tarraga A.M."/>
            <person name="Vernikos G.S."/>
            <person name="Giddens S.R."/>
            <person name="Jackson R.W."/>
            <person name="Preston G.M."/>
            <person name="Zhang X.-X."/>
            <person name="Moon C.D."/>
            <person name="Gehrig S.M."/>
            <person name="Godfrey S.A.C."/>
            <person name="Knight C.G."/>
            <person name="Malone J.G."/>
            <person name="Robinson Z."/>
            <person name="Spiers A.J."/>
            <person name="Harris S."/>
            <person name="Challis G.L."/>
            <person name="Yaxley A.M."/>
            <person name="Harris D."/>
            <person name="Seeger K."/>
            <person name="Murphy L."/>
            <person name="Rutter S."/>
            <person name="Squares R."/>
            <person name="Quail M.A."/>
            <person name="Saunders E."/>
            <person name="Mavromatis K."/>
            <person name="Brettin T.S."/>
            <person name="Bentley S.D."/>
            <person name="Hothersall J."/>
            <person name="Stephens E."/>
            <person name="Thomas C.M."/>
            <person name="Parkhill J."/>
            <person name="Levy S.B."/>
            <person name="Rainey P.B."/>
            <person name="Thomson N.R."/>
        </authorList>
    </citation>
    <scope>NUCLEOTIDE SEQUENCE [LARGE SCALE GENOMIC DNA]</scope>
    <source>
        <strain>Pf0-1</strain>
    </source>
</reference>
<proteinExistence type="inferred from homology"/>
<gene>
    <name evidence="1" type="primary">metXS</name>
    <name type="ordered locus">Pfl01_5323</name>
</gene>
<name>METXS_PSEPF</name>
<accession>Q3K594</accession>
<dbReference type="EC" id="2.3.1.46" evidence="1"/>
<dbReference type="EMBL" id="CP000094">
    <property type="protein sequence ID" value="ABA77060.1"/>
    <property type="molecule type" value="Genomic_DNA"/>
</dbReference>
<dbReference type="SMR" id="Q3K594"/>
<dbReference type="ESTHER" id="psepf-metx">
    <property type="family name" value="Homoserine_transacetylase"/>
</dbReference>
<dbReference type="KEGG" id="pfo:Pfl01_5323"/>
<dbReference type="eggNOG" id="COG2021">
    <property type="taxonomic scope" value="Bacteria"/>
</dbReference>
<dbReference type="HOGENOM" id="CLU_028760_1_2_6"/>
<dbReference type="UniPathway" id="UPA00051">
    <property type="reaction ID" value="UER00075"/>
</dbReference>
<dbReference type="Proteomes" id="UP000002704">
    <property type="component" value="Chromosome"/>
</dbReference>
<dbReference type="GO" id="GO:0005737">
    <property type="term" value="C:cytoplasm"/>
    <property type="evidence" value="ECO:0007669"/>
    <property type="project" value="UniProtKB-SubCell"/>
</dbReference>
<dbReference type="GO" id="GO:0004414">
    <property type="term" value="F:homoserine O-acetyltransferase activity"/>
    <property type="evidence" value="ECO:0007669"/>
    <property type="project" value="TreeGrafter"/>
</dbReference>
<dbReference type="GO" id="GO:0008899">
    <property type="term" value="F:homoserine O-succinyltransferase activity"/>
    <property type="evidence" value="ECO:0007669"/>
    <property type="project" value="UniProtKB-UniRule"/>
</dbReference>
<dbReference type="GO" id="GO:0009092">
    <property type="term" value="P:homoserine metabolic process"/>
    <property type="evidence" value="ECO:0007669"/>
    <property type="project" value="TreeGrafter"/>
</dbReference>
<dbReference type="GO" id="GO:0009086">
    <property type="term" value="P:methionine biosynthetic process"/>
    <property type="evidence" value="ECO:0007669"/>
    <property type="project" value="UniProtKB-UniRule"/>
</dbReference>
<dbReference type="FunFam" id="1.10.1740.110:FF:000001">
    <property type="entry name" value="Homoserine O-acetyltransferase"/>
    <property type="match status" value="1"/>
</dbReference>
<dbReference type="Gene3D" id="1.10.1740.110">
    <property type="match status" value="1"/>
</dbReference>
<dbReference type="Gene3D" id="3.40.50.1820">
    <property type="entry name" value="alpha/beta hydrolase"/>
    <property type="match status" value="1"/>
</dbReference>
<dbReference type="HAMAP" id="MF_00296">
    <property type="entry name" value="MetX_acyltransf"/>
    <property type="match status" value="1"/>
</dbReference>
<dbReference type="InterPro" id="IPR000073">
    <property type="entry name" value="AB_hydrolase_1"/>
</dbReference>
<dbReference type="InterPro" id="IPR029058">
    <property type="entry name" value="AB_hydrolase_fold"/>
</dbReference>
<dbReference type="InterPro" id="IPR008220">
    <property type="entry name" value="HAT_MetX-like"/>
</dbReference>
<dbReference type="NCBIfam" id="TIGR01392">
    <property type="entry name" value="homoserO_Ac_trn"/>
    <property type="match status" value="1"/>
</dbReference>
<dbReference type="NCBIfam" id="NF001209">
    <property type="entry name" value="PRK00175.1"/>
    <property type="match status" value="1"/>
</dbReference>
<dbReference type="PANTHER" id="PTHR32268">
    <property type="entry name" value="HOMOSERINE O-ACETYLTRANSFERASE"/>
    <property type="match status" value="1"/>
</dbReference>
<dbReference type="PANTHER" id="PTHR32268:SF11">
    <property type="entry name" value="HOMOSERINE O-ACETYLTRANSFERASE"/>
    <property type="match status" value="1"/>
</dbReference>
<dbReference type="Pfam" id="PF00561">
    <property type="entry name" value="Abhydrolase_1"/>
    <property type="match status" value="1"/>
</dbReference>
<dbReference type="PIRSF" id="PIRSF000443">
    <property type="entry name" value="Homoser_Ac_trans"/>
    <property type="match status" value="1"/>
</dbReference>
<dbReference type="SUPFAM" id="SSF53474">
    <property type="entry name" value="alpha/beta-Hydrolases"/>
    <property type="match status" value="1"/>
</dbReference>
<evidence type="ECO:0000255" key="1">
    <source>
        <dbReference type="HAMAP-Rule" id="MF_00296"/>
    </source>
</evidence>